<accession>A1VEL2</accession>
<dbReference type="EC" id="6.1.1.4" evidence="1"/>
<dbReference type="EMBL" id="CP000527">
    <property type="protein sequence ID" value="ABM28878.1"/>
    <property type="molecule type" value="Genomic_DNA"/>
</dbReference>
<dbReference type="RefSeq" id="WP_011792507.1">
    <property type="nucleotide sequence ID" value="NC_008751.1"/>
</dbReference>
<dbReference type="SMR" id="A1VEL2"/>
<dbReference type="KEGG" id="dvl:Dvul_1861"/>
<dbReference type="HOGENOM" id="CLU_004427_0_0_7"/>
<dbReference type="Proteomes" id="UP000009173">
    <property type="component" value="Chromosome"/>
</dbReference>
<dbReference type="GO" id="GO:0005829">
    <property type="term" value="C:cytosol"/>
    <property type="evidence" value="ECO:0007669"/>
    <property type="project" value="TreeGrafter"/>
</dbReference>
<dbReference type="GO" id="GO:0002161">
    <property type="term" value="F:aminoacyl-tRNA deacylase activity"/>
    <property type="evidence" value="ECO:0007669"/>
    <property type="project" value="InterPro"/>
</dbReference>
<dbReference type="GO" id="GO:0005524">
    <property type="term" value="F:ATP binding"/>
    <property type="evidence" value="ECO:0007669"/>
    <property type="project" value="UniProtKB-UniRule"/>
</dbReference>
<dbReference type="GO" id="GO:0004823">
    <property type="term" value="F:leucine-tRNA ligase activity"/>
    <property type="evidence" value="ECO:0007669"/>
    <property type="project" value="UniProtKB-UniRule"/>
</dbReference>
<dbReference type="GO" id="GO:0006429">
    <property type="term" value="P:leucyl-tRNA aminoacylation"/>
    <property type="evidence" value="ECO:0007669"/>
    <property type="project" value="UniProtKB-UniRule"/>
</dbReference>
<dbReference type="CDD" id="cd07958">
    <property type="entry name" value="Anticodon_Ia_Leu_BEm"/>
    <property type="match status" value="1"/>
</dbReference>
<dbReference type="CDD" id="cd00812">
    <property type="entry name" value="LeuRS_core"/>
    <property type="match status" value="1"/>
</dbReference>
<dbReference type="FunFam" id="3.10.20.590:FF:000001">
    <property type="entry name" value="Leucine--tRNA ligase"/>
    <property type="match status" value="1"/>
</dbReference>
<dbReference type="FunFam" id="3.40.50.620:FF:000003">
    <property type="entry name" value="Leucine--tRNA ligase"/>
    <property type="match status" value="1"/>
</dbReference>
<dbReference type="FunFam" id="3.40.50.620:FF:000056">
    <property type="entry name" value="Leucine--tRNA ligase"/>
    <property type="match status" value="1"/>
</dbReference>
<dbReference type="FunFam" id="1.10.730.10:FF:000011">
    <property type="entry name" value="Leucine--tRNA ligase chloroplastic/mitochondrial"/>
    <property type="match status" value="1"/>
</dbReference>
<dbReference type="Gene3D" id="3.10.20.590">
    <property type="match status" value="1"/>
</dbReference>
<dbReference type="Gene3D" id="3.40.50.620">
    <property type="entry name" value="HUPs"/>
    <property type="match status" value="2"/>
</dbReference>
<dbReference type="Gene3D" id="1.10.730.10">
    <property type="entry name" value="Isoleucyl-tRNA Synthetase, Domain 1"/>
    <property type="match status" value="1"/>
</dbReference>
<dbReference type="HAMAP" id="MF_00049_B">
    <property type="entry name" value="Leu_tRNA_synth_B"/>
    <property type="match status" value="1"/>
</dbReference>
<dbReference type="InterPro" id="IPR001412">
    <property type="entry name" value="aa-tRNA-synth_I_CS"/>
</dbReference>
<dbReference type="InterPro" id="IPR002300">
    <property type="entry name" value="aa-tRNA-synth_Ia"/>
</dbReference>
<dbReference type="InterPro" id="IPR002302">
    <property type="entry name" value="Leu-tRNA-ligase"/>
</dbReference>
<dbReference type="InterPro" id="IPR025709">
    <property type="entry name" value="Leu_tRNA-synth_edit"/>
</dbReference>
<dbReference type="InterPro" id="IPR013155">
    <property type="entry name" value="M/V/L/I-tRNA-synth_anticd-bd"/>
</dbReference>
<dbReference type="InterPro" id="IPR015413">
    <property type="entry name" value="Methionyl/Leucyl_tRNA_Synth"/>
</dbReference>
<dbReference type="InterPro" id="IPR014729">
    <property type="entry name" value="Rossmann-like_a/b/a_fold"/>
</dbReference>
<dbReference type="InterPro" id="IPR009080">
    <property type="entry name" value="tRNAsynth_Ia_anticodon-bd"/>
</dbReference>
<dbReference type="InterPro" id="IPR009008">
    <property type="entry name" value="Val/Leu/Ile-tRNA-synth_edit"/>
</dbReference>
<dbReference type="NCBIfam" id="TIGR00396">
    <property type="entry name" value="leuS_bact"/>
    <property type="match status" value="1"/>
</dbReference>
<dbReference type="PANTHER" id="PTHR43740:SF2">
    <property type="entry name" value="LEUCINE--TRNA LIGASE, MITOCHONDRIAL"/>
    <property type="match status" value="1"/>
</dbReference>
<dbReference type="PANTHER" id="PTHR43740">
    <property type="entry name" value="LEUCYL-TRNA SYNTHETASE"/>
    <property type="match status" value="1"/>
</dbReference>
<dbReference type="Pfam" id="PF08264">
    <property type="entry name" value="Anticodon_1"/>
    <property type="match status" value="1"/>
</dbReference>
<dbReference type="Pfam" id="PF00133">
    <property type="entry name" value="tRNA-synt_1"/>
    <property type="match status" value="1"/>
</dbReference>
<dbReference type="Pfam" id="PF13603">
    <property type="entry name" value="tRNA-synt_1_2"/>
    <property type="match status" value="1"/>
</dbReference>
<dbReference type="Pfam" id="PF09334">
    <property type="entry name" value="tRNA-synt_1g"/>
    <property type="match status" value="1"/>
</dbReference>
<dbReference type="PRINTS" id="PR00985">
    <property type="entry name" value="TRNASYNTHLEU"/>
</dbReference>
<dbReference type="SUPFAM" id="SSF47323">
    <property type="entry name" value="Anticodon-binding domain of a subclass of class I aminoacyl-tRNA synthetases"/>
    <property type="match status" value="1"/>
</dbReference>
<dbReference type="SUPFAM" id="SSF52374">
    <property type="entry name" value="Nucleotidylyl transferase"/>
    <property type="match status" value="1"/>
</dbReference>
<dbReference type="SUPFAM" id="SSF50677">
    <property type="entry name" value="ValRS/IleRS/LeuRS editing domain"/>
    <property type="match status" value="1"/>
</dbReference>
<dbReference type="PROSITE" id="PS00178">
    <property type="entry name" value="AA_TRNA_LIGASE_I"/>
    <property type="match status" value="1"/>
</dbReference>
<feature type="chain" id="PRO_1000009335" description="Leucine--tRNA ligase">
    <location>
        <begin position="1"/>
        <end position="829"/>
    </location>
</feature>
<feature type="short sequence motif" description="'HIGH' region">
    <location>
        <begin position="40"/>
        <end position="50"/>
    </location>
</feature>
<feature type="short sequence motif" description="'KMSKS' region">
    <location>
        <begin position="581"/>
        <end position="585"/>
    </location>
</feature>
<feature type="binding site" evidence="1">
    <location>
        <position position="584"/>
    </location>
    <ligand>
        <name>ATP</name>
        <dbReference type="ChEBI" id="CHEBI:30616"/>
    </ligand>
</feature>
<comment type="catalytic activity">
    <reaction evidence="1">
        <text>tRNA(Leu) + L-leucine + ATP = L-leucyl-tRNA(Leu) + AMP + diphosphate</text>
        <dbReference type="Rhea" id="RHEA:11688"/>
        <dbReference type="Rhea" id="RHEA-COMP:9613"/>
        <dbReference type="Rhea" id="RHEA-COMP:9622"/>
        <dbReference type="ChEBI" id="CHEBI:30616"/>
        <dbReference type="ChEBI" id="CHEBI:33019"/>
        <dbReference type="ChEBI" id="CHEBI:57427"/>
        <dbReference type="ChEBI" id="CHEBI:78442"/>
        <dbReference type="ChEBI" id="CHEBI:78494"/>
        <dbReference type="ChEBI" id="CHEBI:456215"/>
        <dbReference type="EC" id="6.1.1.4"/>
    </reaction>
</comment>
<comment type="subcellular location">
    <subcellularLocation>
        <location evidence="1">Cytoplasm</location>
    </subcellularLocation>
</comment>
<comment type="similarity">
    <text evidence="1">Belongs to the class-I aminoacyl-tRNA synthetase family.</text>
</comment>
<protein>
    <recommendedName>
        <fullName evidence="1">Leucine--tRNA ligase</fullName>
        <ecNumber evidence="1">6.1.1.4</ecNumber>
    </recommendedName>
    <alternativeName>
        <fullName evidence="1">Leucyl-tRNA synthetase</fullName>
        <shortName evidence="1">LeuRS</shortName>
    </alternativeName>
</protein>
<name>SYL_NITV4</name>
<gene>
    <name evidence="1" type="primary">leuS</name>
    <name type="ordered locus">Dvul_1861</name>
</gene>
<reference key="1">
    <citation type="journal article" date="2009" name="Environ. Microbiol.">
        <title>Contribution of mobile genetic elements to Desulfovibrio vulgaris genome plasticity.</title>
        <authorList>
            <person name="Walker C.B."/>
            <person name="Stolyar S."/>
            <person name="Chivian D."/>
            <person name="Pinel N."/>
            <person name="Gabster J.A."/>
            <person name="Dehal P.S."/>
            <person name="He Z."/>
            <person name="Yang Z.K."/>
            <person name="Yen H.C."/>
            <person name="Zhou J."/>
            <person name="Wall J.D."/>
            <person name="Hazen T.C."/>
            <person name="Arkin A.P."/>
            <person name="Stahl D.A."/>
        </authorList>
    </citation>
    <scope>NUCLEOTIDE SEQUENCE [LARGE SCALE GENOMIC DNA]</scope>
    <source>
        <strain>DP4</strain>
    </source>
</reference>
<keyword id="KW-0030">Aminoacyl-tRNA synthetase</keyword>
<keyword id="KW-0067">ATP-binding</keyword>
<keyword id="KW-0963">Cytoplasm</keyword>
<keyword id="KW-0436">Ligase</keyword>
<keyword id="KW-0547">Nucleotide-binding</keyword>
<keyword id="KW-0648">Protein biosynthesis</keyword>
<organism>
    <name type="scientific">Nitratidesulfovibrio vulgaris (strain DP4)</name>
    <name type="common">Desulfovibrio vulgaris</name>
    <dbReference type="NCBI Taxonomy" id="391774"/>
    <lineage>
        <taxon>Bacteria</taxon>
        <taxon>Pseudomonadati</taxon>
        <taxon>Thermodesulfobacteriota</taxon>
        <taxon>Desulfovibrionia</taxon>
        <taxon>Desulfovibrionales</taxon>
        <taxon>Desulfovibrionaceae</taxon>
        <taxon>Nitratidesulfovibrio</taxon>
    </lineage>
</organism>
<proteinExistence type="inferred from homology"/>
<evidence type="ECO:0000255" key="1">
    <source>
        <dbReference type="HAMAP-Rule" id="MF_00049"/>
    </source>
</evidence>
<sequence>MKYDHQSIETRWQKKWEDSGIFQCDTEADKPKYYVLEMFPYPSGNIHMGHVRNYSIGDVVARFKRMQGFNVLHPMGWDAFGLPAENAAIKNGTHPAKWTFANIDNMRSQLKRLGYSYDWQREVATCTPEYYRWEQLFFLRFLEKGLVYRKKAAQNWCPKCHTVLANEQVIEGLCWRCDSAVEQKELTQWFLRITDYAEELLADLSKLENGWPERVLSMQRNWIGKSTGAEIRFALDGRDDSITVFTTRPDTIFGATFMSIAPEHPLVEELIDGKPQADDVRAFVERIRNMDRIDRQSDTLEKEGVFTGAYCVNPFTGRKMPIWVANFVLAEYGTGAVMAVPAHDQRDFEFARKYDLPMQVVIQPQGETLDPATMSAAWTEAGALVNSGNFDGLANEDAKQRIADDLETTGNGRRTINYRLRDWNISRQRYWGAPIPVIYCDACGVVPEKEENLPVVLPLDVKTHDDGRSPLPHTPAFYECTCPVCGGKARRETDTMDTFVESSWYFARYTDATNDKAPFTPDALRYWLPVDQYIGGVEHAILHLLYSRFFTKALRDCGFIELDEPFANLLTQGMVLMDGSKMSKSKGNVVDPTEMIARYGADTVRLFCLFAAPPERDFDWSESGIEGSYRFVGRVWRLVEELREHLLAVGACSSTAEDAKTPVARELRLKEHATVRKAGDDLNDRFQFNTAIAAVMELVNALYLAKDELVADESGRKVLSSAVSTVLTLLSPFTPHLSEELWALLGHTESVSTLPWPRWKEDALVRDTVTLVVQVNGKLRGKLDIPADASREEVETLALNEPNVLRYLEGVTVRKVVVIPGKLVNVVVS</sequence>